<dbReference type="EMBL" id="CP000158">
    <property type="protein sequence ID" value="ABI77420.1"/>
    <property type="molecule type" value="Genomic_DNA"/>
</dbReference>
<dbReference type="RefSeq" id="WP_011647164.1">
    <property type="nucleotide sequence ID" value="NC_008358.1"/>
</dbReference>
<dbReference type="SMR" id="Q0C077"/>
<dbReference type="STRING" id="228405.HNE_2169"/>
<dbReference type="KEGG" id="hne:HNE_2169"/>
<dbReference type="eggNOG" id="COG1492">
    <property type="taxonomic scope" value="Bacteria"/>
</dbReference>
<dbReference type="HOGENOM" id="CLU_019250_2_2_5"/>
<dbReference type="UniPathway" id="UPA00148"/>
<dbReference type="Proteomes" id="UP000001959">
    <property type="component" value="Chromosome"/>
</dbReference>
<dbReference type="GO" id="GO:0015420">
    <property type="term" value="F:ABC-type vitamin B12 transporter activity"/>
    <property type="evidence" value="ECO:0007669"/>
    <property type="project" value="UniProtKB-UniRule"/>
</dbReference>
<dbReference type="GO" id="GO:0003824">
    <property type="term" value="F:catalytic activity"/>
    <property type="evidence" value="ECO:0007669"/>
    <property type="project" value="InterPro"/>
</dbReference>
<dbReference type="GO" id="GO:0009236">
    <property type="term" value="P:cobalamin biosynthetic process"/>
    <property type="evidence" value="ECO:0007669"/>
    <property type="project" value="UniProtKB-UniRule"/>
</dbReference>
<dbReference type="CDD" id="cd05389">
    <property type="entry name" value="CobQ_N"/>
    <property type="match status" value="1"/>
</dbReference>
<dbReference type="CDD" id="cd01750">
    <property type="entry name" value="GATase1_CobQ"/>
    <property type="match status" value="1"/>
</dbReference>
<dbReference type="Gene3D" id="3.40.50.880">
    <property type="match status" value="1"/>
</dbReference>
<dbReference type="Gene3D" id="3.40.50.300">
    <property type="entry name" value="P-loop containing nucleotide triphosphate hydrolases"/>
    <property type="match status" value="1"/>
</dbReference>
<dbReference type="HAMAP" id="MF_00028">
    <property type="entry name" value="CobQ"/>
    <property type="match status" value="1"/>
</dbReference>
<dbReference type="InterPro" id="IPR029062">
    <property type="entry name" value="Class_I_gatase-like"/>
</dbReference>
<dbReference type="InterPro" id="IPR002586">
    <property type="entry name" value="CobQ/CobB/MinD/ParA_Nub-bd_dom"/>
</dbReference>
<dbReference type="InterPro" id="IPR033949">
    <property type="entry name" value="CobQ_GATase1"/>
</dbReference>
<dbReference type="InterPro" id="IPR047045">
    <property type="entry name" value="CobQ_N"/>
</dbReference>
<dbReference type="InterPro" id="IPR004459">
    <property type="entry name" value="CobQ_synth"/>
</dbReference>
<dbReference type="InterPro" id="IPR011698">
    <property type="entry name" value="GATase_3"/>
</dbReference>
<dbReference type="InterPro" id="IPR027417">
    <property type="entry name" value="P-loop_NTPase"/>
</dbReference>
<dbReference type="NCBIfam" id="TIGR00313">
    <property type="entry name" value="cobQ"/>
    <property type="match status" value="1"/>
</dbReference>
<dbReference type="NCBIfam" id="NF001989">
    <property type="entry name" value="PRK00784.1"/>
    <property type="match status" value="1"/>
</dbReference>
<dbReference type="PANTHER" id="PTHR21343:SF1">
    <property type="entry name" value="COBYRIC ACID SYNTHASE"/>
    <property type="match status" value="1"/>
</dbReference>
<dbReference type="PANTHER" id="PTHR21343">
    <property type="entry name" value="DETHIOBIOTIN SYNTHETASE"/>
    <property type="match status" value="1"/>
</dbReference>
<dbReference type="Pfam" id="PF01656">
    <property type="entry name" value="CbiA"/>
    <property type="match status" value="1"/>
</dbReference>
<dbReference type="Pfam" id="PF07685">
    <property type="entry name" value="GATase_3"/>
    <property type="match status" value="1"/>
</dbReference>
<dbReference type="SUPFAM" id="SSF52317">
    <property type="entry name" value="Class I glutamine amidotransferase-like"/>
    <property type="match status" value="1"/>
</dbReference>
<dbReference type="SUPFAM" id="SSF52540">
    <property type="entry name" value="P-loop containing nucleoside triphosphate hydrolases"/>
    <property type="match status" value="1"/>
</dbReference>
<dbReference type="PROSITE" id="PS51274">
    <property type="entry name" value="GATASE_COBBQ"/>
    <property type="match status" value="1"/>
</dbReference>
<sequence length="495" mass="51894">MTARAIMIQGTGSDVGKSLLVAGFCRLAARRGLSVAPFKPQNMSNNAAATADGGEIGRAQALQARACGLDPQTDFNPVLLKPQSDCTAQVIVHGRPTATLEAADYMARRDTLRGAVLESFARLTARFDLVIVEGAGSPAEINLRDRDIANMGFARAAGVPVVLAGDIDRGGVIAALVGTKTVIDPADAAMIRAFLINKFRGDPALFEPAMADIERMTGWAGLGIVPWLSAAARLPAEDGVALEQMRPTGGGRIRIAAPMLSRIANFDDADPLRAEPSVDFFFVPPGQAIPRDVDVILLFGTKSTLGDMAFLRAQGWDHDILAHARTGGRILGICGGYQMLGQWLCDPEGVDGAAGELPGLGLLKTDTTMQGEKTVRPVTGQCARTGLPVSGYEIHAGLTRGPDAARPFLHLPEGPDGAISPDGRVEGTYVHGLFAQDAFRAAWLENVRAGASSDAAYGASVEAALDELADGLEAHLDVDRFFALAAAPGWRGAPS</sequence>
<accession>Q0C077</accession>
<gene>
    <name evidence="1" type="primary">cobQ</name>
    <name type="ordered locus">HNE_2169</name>
</gene>
<evidence type="ECO:0000255" key="1">
    <source>
        <dbReference type="HAMAP-Rule" id="MF_00028"/>
    </source>
</evidence>
<protein>
    <recommendedName>
        <fullName evidence="1">Cobyric acid synthase</fullName>
    </recommendedName>
</protein>
<reference key="1">
    <citation type="journal article" date="2006" name="J. Bacteriol.">
        <title>Comparative genomic evidence for a close relationship between the dimorphic prosthecate bacteria Hyphomonas neptunium and Caulobacter crescentus.</title>
        <authorList>
            <person name="Badger J.H."/>
            <person name="Hoover T.R."/>
            <person name="Brun Y.V."/>
            <person name="Weiner R.M."/>
            <person name="Laub M.T."/>
            <person name="Alexandre G."/>
            <person name="Mrazek J."/>
            <person name="Ren Q."/>
            <person name="Paulsen I.T."/>
            <person name="Nelson K.E."/>
            <person name="Khouri H.M."/>
            <person name="Radune D."/>
            <person name="Sosa J."/>
            <person name="Dodson R.J."/>
            <person name="Sullivan S.A."/>
            <person name="Rosovitz M.J."/>
            <person name="Madupu R."/>
            <person name="Brinkac L.M."/>
            <person name="Durkin A.S."/>
            <person name="Daugherty S.C."/>
            <person name="Kothari S.P."/>
            <person name="Giglio M.G."/>
            <person name="Zhou L."/>
            <person name="Haft D.H."/>
            <person name="Selengut J.D."/>
            <person name="Davidsen T.M."/>
            <person name="Yang Q."/>
            <person name="Zafar N."/>
            <person name="Ward N.L."/>
        </authorList>
    </citation>
    <scope>NUCLEOTIDE SEQUENCE [LARGE SCALE GENOMIC DNA]</scope>
    <source>
        <strain>ATCC 15444</strain>
    </source>
</reference>
<name>COBQ_HYPNA</name>
<organism>
    <name type="scientific">Hyphomonas neptunium (strain ATCC 15444)</name>
    <dbReference type="NCBI Taxonomy" id="228405"/>
    <lineage>
        <taxon>Bacteria</taxon>
        <taxon>Pseudomonadati</taxon>
        <taxon>Pseudomonadota</taxon>
        <taxon>Alphaproteobacteria</taxon>
        <taxon>Hyphomonadales</taxon>
        <taxon>Hyphomonadaceae</taxon>
        <taxon>Hyphomonas</taxon>
    </lineage>
</organism>
<comment type="function">
    <text evidence="1">Catalyzes amidations at positions B, D, E, and G on adenosylcobyrinic A,C-diamide. NH(2) groups are provided by glutamine, and one molecule of ATP is hydrogenolyzed for each amidation.</text>
</comment>
<comment type="pathway">
    <text evidence="1">Cofactor biosynthesis; adenosylcobalamin biosynthesis.</text>
</comment>
<comment type="similarity">
    <text evidence="1">Belongs to the CobB/CobQ family. CobQ subfamily.</text>
</comment>
<feature type="chain" id="PRO_0000332342" description="Cobyric acid synthase">
    <location>
        <begin position="1"/>
        <end position="495"/>
    </location>
</feature>
<feature type="domain" description="GATase cobBQ-type" evidence="1">
    <location>
        <begin position="252"/>
        <end position="439"/>
    </location>
</feature>
<feature type="active site" description="Nucleophile" evidence="1">
    <location>
        <position position="334"/>
    </location>
</feature>
<feature type="active site" evidence="1">
    <location>
        <position position="431"/>
    </location>
</feature>
<keyword id="KW-0169">Cobalamin biosynthesis</keyword>
<keyword id="KW-0315">Glutamine amidotransferase</keyword>
<keyword id="KW-1185">Reference proteome</keyword>
<proteinExistence type="inferred from homology"/>